<reference key="1">
    <citation type="journal article" date="2003" name="Development">
        <title>Dissection of floral induction pathways using global expression analysis.</title>
        <authorList>
            <person name="Schmid M."/>
            <person name="Uhlenhaut N.H."/>
            <person name="Godard F."/>
            <person name="Demar M."/>
            <person name="Bressan R."/>
            <person name="Weigel D."/>
            <person name="Lohmann J.U."/>
        </authorList>
    </citation>
    <scope>NUCLEOTIDE SEQUENCE [MRNA] (ISOFORM 1)</scope>
    <scope>FUNCTION</scope>
    <scope>INDUCTION</scope>
</reference>
<reference key="2">
    <citation type="submission" date="2004-02" db="EMBL/GenBank/DDBJ databases">
        <title>Molecular cloning, expression, phylogenetic and functional characterization of the Arabidopsis AP2/EREBP transcription factor family.</title>
        <authorList>
            <person name="Pan Y."/>
            <person name="Gong W."/>
            <person name="Liu D."/>
            <person name="Fu Q."/>
            <person name="Mei W.-Q."/>
            <person name="Song W.-Q."/>
            <person name="Ma L.-G."/>
            <person name="Luo J.-C."/>
            <person name="Deng X.-W."/>
            <person name="Zhu Y.-X."/>
        </authorList>
    </citation>
    <scope>NUCLEOTIDE SEQUENCE [MRNA] (ISOFORM 2)</scope>
</reference>
<reference key="3">
    <citation type="journal article" date="2000" name="Nature">
        <title>Sequence and analysis of chromosome 3 of the plant Arabidopsis thaliana.</title>
        <authorList>
            <person name="Salanoubat M."/>
            <person name="Lemcke K."/>
            <person name="Rieger M."/>
            <person name="Ansorge W."/>
            <person name="Unseld M."/>
            <person name="Fartmann B."/>
            <person name="Valle G."/>
            <person name="Bloecker H."/>
            <person name="Perez-Alonso M."/>
            <person name="Obermaier B."/>
            <person name="Delseny M."/>
            <person name="Boutry M."/>
            <person name="Grivell L.A."/>
            <person name="Mache R."/>
            <person name="Puigdomenech P."/>
            <person name="De Simone V."/>
            <person name="Choisne N."/>
            <person name="Artiguenave F."/>
            <person name="Robert C."/>
            <person name="Brottier P."/>
            <person name="Wincker P."/>
            <person name="Cattolico L."/>
            <person name="Weissenbach J."/>
            <person name="Saurin W."/>
            <person name="Quetier F."/>
            <person name="Schaefer M."/>
            <person name="Mueller-Auer S."/>
            <person name="Gabel C."/>
            <person name="Fuchs M."/>
            <person name="Benes V."/>
            <person name="Wurmbach E."/>
            <person name="Drzonek H."/>
            <person name="Erfle H."/>
            <person name="Jordan N."/>
            <person name="Bangert S."/>
            <person name="Wiedelmann R."/>
            <person name="Kranz H."/>
            <person name="Voss H."/>
            <person name="Holland R."/>
            <person name="Brandt P."/>
            <person name="Nyakatura G."/>
            <person name="Vezzi A."/>
            <person name="D'Angelo M."/>
            <person name="Pallavicini A."/>
            <person name="Toppo S."/>
            <person name="Simionati B."/>
            <person name="Conrad A."/>
            <person name="Hornischer K."/>
            <person name="Kauer G."/>
            <person name="Loehnert T.-H."/>
            <person name="Nordsiek G."/>
            <person name="Reichelt J."/>
            <person name="Scharfe M."/>
            <person name="Schoen O."/>
            <person name="Bargues M."/>
            <person name="Terol J."/>
            <person name="Climent J."/>
            <person name="Navarro P."/>
            <person name="Collado C."/>
            <person name="Perez-Perez A."/>
            <person name="Ottenwaelder B."/>
            <person name="Duchemin D."/>
            <person name="Cooke R."/>
            <person name="Laudie M."/>
            <person name="Berger-Llauro C."/>
            <person name="Purnelle B."/>
            <person name="Masuy D."/>
            <person name="de Haan M."/>
            <person name="Maarse A.C."/>
            <person name="Alcaraz J.-P."/>
            <person name="Cottet A."/>
            <person name="Casacuberta E."/>
            <person name="Monfort A."/>
            <person name="Argiriou A."/>
            <person name="Flores M."/>
            <person name="Liguori R."/>
            <person name="Vitale D."/>
            <person name="Mannhaupt G."/>
            <person name="Haase D."/>
            <person name="Schoof H."/>
            <person name="Rudd S."/>
            <person name="Zaccaria P."/>
            <person name="Mewes H.-W."/>
            <person name="Mayer K.F.X."/>
            <person name="Kaul S."/>
            <person name="Town C.D."/>
            <person name="Koo H.L."/>
            <person name="Tallon L.J."/>
            <person name="Jenkins J."/>
            <person name="Rooney T."/>
            <person name="Rizzo M."/>
            <person name="Walts A."/>
            <person name="Utterback T."/>
            <person name="Fujii C.Y."/>
            <person name="Shea T.P."/>
            <person name="Creasy T.H."/>
            <person name="Haas B."/>
            <person name="Maiti R."/>
            <person name="Wu D."/>
            <person name="Peterson J."/>
            <person name="Van Aken S."/>
            <person name="Pai G."/>
            <person name="Militscher J."/>
            <person name="Sellers P."/>
            <person name="Gill J.E."/>
            <person name="Feldblyum T.V."/>
            <person name="Preuss D."/>
            <person name="Lin X."/>
            <person name="Nierman W.C."/>
            <person name="Salzberg S.L."/>
            <person name="White O."/>
            <person name="Venter J.C."/>
            <person name="Fraser C.M."/>
            <person name="Kaneko T."/>
            <person name="Nakamura Y."/>
            <person name="Sato S."/>
            <person name="Kato T."/>
            <person name="Asamizu E."/>
            <person name="Sasamoto S."/>
            <person name="Kimura T."/>
            <person name="Idesawa K."/>
            <person name="Kawashima K."/>
            <person name="Kishida Y."/>
            <person name="Kiyokawa C."/>
            <person name="Kohara M."/>
            <person name="Matsumoto M."/>
            <person name="Matsuno A."/>
            <person name="Muraki A."/>
            <person name="Nakayama S."/>
            <person name="Nakazaki N."/>
            <person name="Shinpo S."/>
            <person name="Takeuchi C."/>
            <person name="Wada T."/>
            <person name="Watanabe A."/>
            <person name="Yamada M."/>
            <person name="Yasuda M."/>
            <person name="Tabata S."/>
        </authorList>
    </citation>
    <scope>NUCLEOTIDE SEQUENCE [LARGE SCALE GENOMIC DNA]</scope>
    <source>
        <strain>cv. Columbia</strain>
    </source>
</reference>
<reference key="4">
    <citation type="journal article" date="2017" name="Plant J.">
        <title>Araport11: a complete reannotation of the Arabidopsis thaliana reference genome.</title>
        <authorList>
            <person name="Cheng C.Y."/>
            <person name="Krishnakumar V."/>
            <person name="Chan A.P."/>
            <person name="Thibaud-Nissen F."/>
            <person name="Schobel S."/>
            <person name="Town C.D."/>
        </authorList>
    </citation>
    <scope>GENOME REANNOTATION</scope>
    <source>
        <strain>cv. Columbia</strain>
    </source>
</reference>
<reference key="5">
    <citation type="submission" date="2006-08" db="EMBL/GenBank/DDBJ databases">
        <title>Arabidopsis ORF clones.</title>
        <authorList>
            <person name="Bautista V.R."/>
            <person name="Kim C.J."/>
            <person name="Chen H."/>
            <person name="Quinitio C."/>
            <person name="Ecker J.R."/>
        </authorList>
    </citation>
    <scope>NUCLEOTIDE SEQUENCE [LARGE SCALE MRNA] (ISOFORM 2)</scope>
    <source>
        <strain>cv. Columbia</strain>
    </source>
</reference>
<reference key="6">
    <citation type="journal article" date="2006" name="Plant Physiol.">
        <title>Genome-wide analysis of the ERF gene family in Arabidopsis and rice.</title>
        <authorList>
            <person name="Nakano T."/>
            <person name="Suzuki K."/>
            <person name="Fujimura T."/>
            <person name="Shinshi H."/>
        </authorList>
    </citation>
    <scope>GENE FAMILY</scope>
    <scope>NOMENCLATURE</scope>
</reference>
<proteinExistence type="evidence at transcript level"/>
<comment type="function">
    <text evidence="1 3">Probably acts as a transcriptional activator. Binds to the GCC-box pathogenesis-related promoter element. May be involved in the regulation of gene expression by stress factors and by components of stress signal transduction pathways (By similarity). Repressor of flowering.</text>
</comment>
<comment type="subcellular location">
    <subcellularLocation>
        <location evidence="6">Nucleus</location>
    </subcellularLocation>
</comment>
<comment type="alternative products">
    <event type="alternative splicing"/>
    <isoform>
        <id>Q6PV68-1</id>
        <name>1</name>
        <sequence type="displayed"/>
    </isoform>
    <isoform>
        <id>Q6PV68-2</id>
        <name>2</name>
        <sequence type="described" ref="VSP_027411 VSP_027412"/>
    </isoform>
</comment>
<comment type="induction">
    <text evidence="3">Repressed by miR172 after photoperiod changement.</text>
</comment>
<comment type="miscellaneous">
    <text>'Schlafmuetze' means 'nightcap' in German.</text>
</comment>
<comment type="similarity">
    <text evidence="6">Belongs to the AP2/ERF transcription factor family. AP2 subfamily.</text>
</comment>
<evidence type="ECO:0000250" key="1"/>
<evidence type="ECO:0000255" key="2">
    <source>
        <dbReference type="PROSITE-ProRule" id="PRU00366"/>
    </source>
</evidence>
<evidence type="ECO:0000269" key="3">
    <source>
    </source>
</evidence>
<evidence type="ECO:0000303" key="4">
    <source ref="2"/>
</evidence>
<evidence type="ECO:0000303" key="5">
    <source ref="5"/>
</evidence>
<evidence type="ECO:0000305" key="6"/>
<sequence>MLDLNLKIFSSYNEDQDRKVPLMISTTGEEESNSSSSSTTDSAARDAFIAFGILKRDDDLVPPPPPPPHKETGDLFPVVADARRNIEFSVEDSHWLNLSSLQRNTQKMVKKSRRGPRSRSSQYRGVTFYRRTGRWESHIWDCGKQVYLGGFDTAYAAARAYDRAAIKFRGLDADINFVVDDYRHDIDKMKNLNKVEFVQTLRRESASFGRGSSKYKGLALQKCTQFKTHDQIHLFQNRGWDAAAIKYNELGKGEGAMKFGAHIKGNGHNDLELSLGISSSSESIKLTTGDYYKGINRSTMGLYGKQSSIFLPMATMKPLKTVAASSGFPFISMTSSSSSMSNCFDP</sequence>
<protein>
    <recommendedName>
        <fullName>AP2-like ethylene-responsive transcription factor SMZ</fullName>
    </recommendedName>
    <alternativeName>
        <fullName>Protein SCHLAFMUTZE</fullName>
    </alternativeName>
</protein>
<organism>
    <name type="scientific">Arabidopsis thaliana</name>
    <name type="common">Mouse-ear cress</name>
    <dbReference type="NCBI Taxonomy" id="3702"/>
    <lineage>
        <taxon>Eukaryota</taxon>
        <taxon>Viridiplantae</taxon>
        <taxon>Streptophyta</taxon>
        <taxon>Embryophyta</taxon>
        <taxon>Tracheophyta</taxon>
        <taxon>Spermatophyta</taxon>
        <taxon>Magnoliopsida</taxon>
        <taxon>eudicotyledons</taxon>
        <taxon>Gunneridae</taxon>
        <taxon>Pentapetalae</taxon>
        <taxon>rosids</taxon>
        <taxon>malvids</taxon>
        <taxon>Brassicales</taxon>
        <taxon>Brassicaceae</taxon>
        <taxon>Camelineae</taxon>
        <taxon>Arabidopsis</taxon>
    </lineage>
</organism>
<dbReference type="EMBL" id="AY576275">
    <property type="protein sequence ID" value="AAS88428.1"/>
    <property type="molecule type" value="mRNA"/>
</dbReference>
<dbReference type="EMBL" id="AY560886">
    <property type="protein sequence ID" value="AAT44953.1"/>
    <property type="molecule type" value="mRNA"/>
</dbReference>
<dbReference type="EMBL" id="AL049655">
    <property type="protein sequence ID" value="CAB41085.1"/>
    <property type="molecule type" value="Genomic_DNA"/>
</dbReference>
<dbReference type="EMBL" id="CP002686">
    <property type="protein sequence ID" value="AEE79323.1"/>
    <property type="molecule type" value="Genomic_DNA"/>
</dbReference>
<dbReference type="EMBL" id="CP002686">
    <property type="protein sequence ID" value="AEE79324.1"/>
    <property type="molecule type" value="Genomic_DNA"/>
</dbReference>
<dbReference type="EMBL" id="BT026352">
    <property type="protein sequence ID" value="ABH04459.1"/>
    <property type="molecule type" value="mRNA"/>
</dbReference>
<dbReference type="PIR" id="T06721">
    <property type="entry name" value="T06721"/>
</dbReference>
<dbReference type="RefSeq" id="NP_001078290.1">
    <molecule id="Q6PV68-2"/>
    <property type="nucleotide sequence ID" value="NM_001084821.1"/>
</dbReference>
<dbReference type="RefSeq" id="NP_191059.2">
    <molecule id="Q6PV68-1"/>
    <property type="nucleotide sequence ID" value="NM_115356.2"/>
</dbReference>
<dbReference type="SMR" id="Q6PV68"/>
<dbReference type="BioGRID" id="9980">
    <property type="interactions" value="6"/>
</dbReference>
<dbReference type="IntAct" id="Q6PV68">
    <property type="interactions" value="5"/>
</dbReference>
<dbReference type="STRING" id="3702.Q6PV68"/>
<dbReference type="PaxDb" id="3702-AT3G54990.1"/>
<dbReference type="ProteomicsDB" id="228454">
    <molecule id="Q6PV68-1"/>
</dbReference>
<dbReference type="EnsemblPlants" id="AT3G54990.1">
    <molecule id="Q6PV68-1"/>
    <property type="protein sequence ID" value="AT3G54990.1"/>
    <property type="gene ID" value="AT3G54990"/>
</dbReference>
<dbReference type="EnsemblPlants" id="AT3G54990.2">
    <molecule id="Q6PV68-2"/>
    <property type="protein sequence ID" value="AT3G54990.2"/>
    <property type="gene ID" value="AT3G54990"/>
</dbReference>
<dbReference type="GeneID" id="824664"/>
<dbReference type="Gramene" id="AT3G54990.1">
    <molecule id="Q6PV68-1"/>
    <property type="protein sequence ID" value="AT3G54990.1"/>
    <property type="gene ID" value="AT3G54990"/>
</dbReference>
<dbReference type="Gramene" id="AT3G54990.2">
    <molecule id="Q6PV68-2"/>
    <property type="protein sequence ID" value="AT3G54990.2"/>
    <property type="gene ID" value="AT3G54990"/>
</dbReference>
<dbReference type="KEGG" id="ath:AT3G54990"/>
<dbReference type="Araport" id="AT3G54990"/>
<dbReference type="TAIR" id="AT3G54990">
    <property type="gene designation" value="SMZ"/>
</dbReference>
<dbReference type="eggNOG" id="ENOG502R1D7">
    <property type="taxonomic scope" value="Eukaryota"/>
</dbReference>
<dbReference type="InParanoid" id="Q6PV68"/>
<dbReference type="OMA" id="SSMSTCF"/>
<dbReference type="PhylomeDB" id="Q6PV68"/>
<dbReference type="PRO" id="PR:Q6PV68"/>
<dbReference type="Proteomes" id="UP000006548">
    <property type="component" value="Chromosome 3"/>
</dbReference>
<dbReference type="ExpressionAtlas" id="Q6PV68">
    <property type="expression patterns" value="baseline and differential"/>
</dbReference>
<dbReference type="GO" id="GO:0005634">
    <property type="term" value="C:nucleus"/>
    <property type="evidence" value="ECO:0007669"/>
    <property type="project" value="UniProtKB-SubCell"/>
</dbReference>
<dbReference type="GO" id="GO:0003700">
    <property type="term" value="F:DNA-binding transcription factor activity"/>
    <property type="evidence" value="ECO:0000250"/>
    <property type="project" value="TAIR"/>
</dbReference>
<dbReference type="GO" id="GO:0000976">
    <property type="term" value="F:transcription cis-regulatory region binding"/>
    <property type="evidence" value="ECO:0000353"/>
    <property type="project" value="TAIR"/>
</dbReference>
<dbReference type="GO" id="GO:0009658">
    <property type="term" value="P:chloroplast organization"/>
    <property type="evidence" value="ECO:0000315"/>
    <property type="project" value="TAIR"/>
</dbReference>
<dbReference type="GO" id="GO:0009873">
    <property type="term" value="P:ethylene-activated signaling pathway"/>
    <property type="evidence" value="ECO:0007669"/>
    <property type="project" value="UniProtKB-KW"/>
</dbReference>
<dbReference type="CDD" id="cd00018">
    <property type="entry name" value="AP2"/>
    <property type="match status" value="1"/>
</dbReference>
<dbReference type="FunFam" id="3.30.730.10:FF:000004">
    <property type="entry name" value="AP2-like ethylene-responsive transcription factor"/>
    <property type="match status" value="1"/>
</dbReference>
<dbReference type="Gene3D" id="3.30.730.10">
    <property type="entry name" value="AP2/ERF domain"/>
    <property type="match status" value="1"/>
</dbReference>
<dbReference type="InterPro" id="IPR001471">
    <property type="entry name" value="AP2/ERF_dom"/>
</dbReference>
<dbReference type="InterPro" id="IPR036955">
    <property type="entry name" value="AP2/ERF_dom_sf"/>
</dbReference>
<dbReference type="InterPro" id="IPR016177">
    <property type="entry name" value="DNA-bd_dom_sf"/>
</dbReference>
<dbReference type="PANTHER" id="PTHR32467">
    <property type="entry name" value="AP2-LIKE ETHYLENE-RESPONSIVE TRANSCRIPTION FACTOR"/>
    <property type="match status" value="1"/>
</dbReference>
<dbReference type="PANTHER" id="PTHR32467:SF177">
    <property type="entry name" value="AP2-LIKE ETHYLENE-RESPONSIVE TRANSCRIPTION FACTOR SMZ-RELATED"/>
    <property type="match status" value="1"/>
</dbReference>
<dbReference type="Pfam" id="PF00847">
    <property type="entry name" value="AP2"/>
    <property type="match status" value="1"/>
</dbReference>
<dbReference type="SMART" id="SM00380">
    <property type="entry name" value="AP2"/>
    <property type="match status" value="1"/>
</dbReference>
<dbReference type="SUPFAM" id="SSF54171">
    <property type="entry name" value="DNA-binding domain"/>
    <property type="match status" value="1"/>
</dbReference>
<dbReference type="PROSITE" id="PS51032">
    <property type="entry name" value="AP2_ERF"/>
    <property type="match status" value="1"/>
</dbReference>
<accession>Q6PV68</accession>
<accession>Q9SV47</accession>
<name>SMZ_ARATH</name>
<feature type="chain" id="PRO_0000297943" description="AP2-like ethylene-responsive transcription factor SMZ">
    <location>
        <begin position="1"/>
        <end position="346"/>
    </location>
</feature>
<feature type="DNA-binding region" description="AP2/ERF" evidence="2">
    <location>
        <begin position="122"/>
        <end position="178"/>
    </location>
</feature>
<feature type="splice variant" id="VSP_027411" description="In isoform 2." evidence="4 5">
    <original>GWDAAAIKY</original>
    <variation>YHFVRHVIF</variation>
    <location>
        <begin position="239"/>
        <end position="247"/>
    </location>
</feature>
<feature type="splice variant" id="VSP_027412" description="In isoform 2." evidence="4 5">
    <location>
        <begin position="248"/>
        <end position="346"/>
    </location>
</feature>
<keyword id="KW-0010">Activator</keyword>
<keyword id="KW-0025">Alternative splicing</keyword>
<keyword id="KW-0238">DNA-binding</keyword>
<keyword id="KW-0936">Ethylene signaling pathway</keyword>
<keyword id="KW-0539">Nucleus</keyword>
<keyword id="KW-1185">Reference proteome</keyword>
<keyword id="KW-0804">Transcription</keyword>
<keyword id="KW-0805">Transcription regulation</keyword>
<gene>
    <name type="primary">SMZ</name>
    <name type="ordered locus">At3g54990</name>
    <name type="ORF">F28P10.30</name>
</gene>